<evidence type="ECO:0000255" key="1">
    <source>
        <dbReference type="HAMAP-Rule" id="MF_01357"/>
    </source>
</evidence>
<organism>
    <name type="scientific">Gloeobacter violaceus (strain ATCC 29082 / PCC 7421)</name>
    <dbReference type="NCBI Taxonomy" id="251221"/>
    <lineage>
        <taxon>Bacteria</taxon>
        <taxon>Bacillati</taxon>
        <taxon>Cyanobacteriota</taxon>
        <taxon>Cyanophyceae</taxon>
        <taxon>Gloeobacterales</taxon>
        <taxon>Gloeobacteraceae</taxon>
        <taxon>Gloeobacter</taxon>
    </lineage>
</organism>
<feature type="chain" id="PRO_0000358109" description="NAD(P)H-quinone oxidoreductase subunit J">
    <location>
        <begin position="1"/>
        <end position="176"/>
    </location>
</feature>
<comment type="function">
    <text evidence="1">NDH-1 shuttles electrons from an unknown electron donor, via FMN and iron-sulfur (Fe-S) centers, to quinones in the respiratory and/or the photosynthetic chain. The immediate electron acceptor for the enzyme in this species is believed to be plastoquinone. Couples the redox reaction to proton translocation, and thus conserves the redox energy in a proton gradient. Cyanobacterial NDH-1 also plays a role in inorganic carbon-concentration.</text>
</comment>
<comment type="catalytic activity">
    <reaction evidence="1">
        <text>a plastoquinone + NADH + (n+1) H(+)(in) = a plastoquinol + NAD(+) + n H(+)(out)</text>
        <dbReference type="Rhea" id="RHEA:42608"/>
        <dbReference type="Rhea" id="RHEA-COMP:9561"/>
        <dbReference type="Rhea" id="RHEA-COMP:9562"/>
        <dbReference type="ChEBI" id="CHEBI:15378"/>
        <dbReference type="ChEBI" id="CHEBI:17757"/>
        <dbReference type="ChEBI" id="CHEBI:57540"/>
        <dbReference type="ChEBI" id="CHEBI:57945"/>
        <dbReference type="ChEBI" id="CHEBI:62192"/>
    </reaction>
</comment>
<comment type="catalytic activity">
    <reaction evidence="1">
        <text>a plastoquinone + NADPH + (n+1) H(+)(in) = a plastoquinol + NADP(+) + n H(+)(out)</text>
        <dbReference type="Rhea" id="RHEA:42612"/>
        <dbReference type="Rhea" id="RHEA-COMP:9561"/>
        <dbReference type="Rhea" id="RHEA-COMP:9562"/>
        <dbReference type="ChEBI" id="CHEBI:15378"/>
        <dbReference type="ChEBI" id="CHEBI:17757"/>
        <dbReference type="ChEBI" id="CHEBI:57783"/>
        <dbReference type="ChEBI" id="CHEBI:58349"/>
        <dbReference type="ChEBI" id="CHEBI:62192"/>
    </reaction>
</comment>
<comment type="subunit">
    <text evidence="1">NDH-1 can be composed of about 15 different subunits; different subcomplexes with different compositions have been identified which probably have different functions.</text>
</comment>
<comment type="subcellular location">
    <subcellularLocation>
        <location evidence="1">Cell inner membrane</location>
        <topology evidence="1">Peripheral membrane protein</topology>
        <orientation evidence="1">Cytoplasmic side</orientation>
    </subcellularLocation>
</comment>
<comment type="similarity">
    <text evidence="1">Belongs to the complex I 30 kDa subunit family.</text>
</comment>
<keyword id="KW-0997">Cell inner membrane</keyword>
<keyword id="KW-1003">Cell membrane</keyword>
<keyword id="KW-0472">Membrane</keyword>
<keyword id="KW-0520">NAD</keyword>
<keyword id="KW-0521">NADP</keyword>
<keyword id="KW-0618">Plastoquinone</keyword>
<keyword id="KW-0874">Quinone</keyword>
<keyword id="KW-1185">Reference proteome</keyword>
<keyword id="KW-1278">Translocase</keyword>
<keyword id="KW-0813">Transport</keyword>
<accession>Q7NML5</accession>
<dbReference type="EC" id="7.1.1.-" evidence="1"/>
<dbReference type="EMBL" id="BA000045">
    <property type="protein sequence ID" value="BAC88691.1"/>
    <property type="molecule type" value="Genomic_DNA"/>
</dbReference>
<dbReference type="RefSeq" id="NP_923696.1">
    <property type="nucleotide sequence ID" value="NC_005125.1"/>
</dbReference>
<dbReference type="RefSeq" id="WP_011140752.1">
    <property type="nucleotide sequence ID" value="NC_005125.1"/>
</dbReference>
<dbReference type="SMR" id="Q7NML5"/>
<dbReference type="FunCoup" id="Q7NML5">
    <property type="interactions" value="98"/>
</dbReference>
<dbReference type="STRING" id="251221.gene:10758227"/>
<dbReference type="EnsemblBacteria" id="BAC88691">
    <property type="protein sequence ID" value="BAC88691"/>
    <property type="gene ID" value="BAC88691"/>
</dbReference>
<dbReference type="KEGG" id="gvi:glr0750"/>
<dbReference type="PATRIC" id="fig|251221.4.peg.763"/>
<dbReference type="eggNOG" id="COG0852">
    <property type="taxonomic scope" value="Bacteria"/>
</dbReference>
<dbReference type="HOGENOM" id="CLU_042628_9_1_3"/>
<dbReference type="InParanoid" id="Q7NML5"/>
<dbReference type="OrthoDB" id="9803286at2"/>
<dbReference type="Proteomes" id="UP000000557">
    <property type="component" value="Chromosome"/>
</dbReference>
<dbReference type="GO" id="GO:0005886">
    <property type="term" value="C:plasma membrane"/>
    <property type="evidence" value="ECO:0007669"/>
    <property type="project" value="UniProtKB-SubCell"/>
</dbReference>
<dbReference type="GO" id="GO:0008137">
    <property type="term" value="F:NADH dehydrogenase (ubiquinone) activity"/>
    <property type="evidence" value="ECO:0007669"/>
    <property type="project" value="InterPro"/>
</dbReference>
<dbReference type="GO" id="GO:0048038">
    <property type="term" value="F:quinone binding"/>
    <property type="evidence" value="ECO:0007669"/>
    <property type="project" value="UniProtKB-KW"/>
</dbReference>
<dbReference type="GO" id="GO:0019684">
    <property type="term" value="P:photosynthesis, light reaction"/>
    <property type="evidence" value="ECO:0007669"/>
    <property type="project" value="UniProtKB-UniRule"/>
</dbReference>
<dbReference type="Gene3D" id="3.30.460.80">
    <property type="entry name" value="NADH:ubiquinone oxidoreductase, 30kDa subunit"/>
    <property type="match status" value="1"/>
</dbReference>
<dbReference type="HAMAP" id="MF_01357">
    <property type="entry name" value="NDH1_NuoC"/>
    <property type="match status" value="1"/>
</dbReference>
<dbReference type="InterPro" id="IPR010218">
    <property type="entry name" value="NADH_DH_suC"/>
</dbReference>
<dbReference type="InterPro" id="IPR037232">
    <property type="entry name" value="NADH_quin_OxRdtase_su_C/D-like"/>
</dbReference>
<dbReference type="InterPro" id="IPR001268">
    <property type="entry name" value="NADH_UbQ_OxRdtase_30kDa_su"/>
</dbReference>
<dbReference type="NCBIfam" id="NF009141">
    <property type="entry name" value="PRK12494.1"/>
    <property type="match status" value="1"/>
</dbReference>
<dbReference type="PANTHER" id="PTHR10884:SF14">
    <property type="entry name" value="NADH DEHYDROGENASE [UBIQUINONE] IRON-SULFUR PROTEIN 3, MITOCHONDRIAL"/>
    <property type="match status" value="1"/>
</dbReference>
<dbReference type="PANTHER" id="PTHR10884">
    <property type="entry name" value="NADH DEHYDROGENASE UBIQUINONE IRON-SULFUR PROTEIN 3"/>
    <property type="match status" value="1"/>
</dbReference>
<dbReference type="Pfam" id="PF00329">
    <property type="entry name" value="Complex1_30kDa"/>
    <property type="match status" value="1"/>
</dbReference>
<dbReference type="SUPFAM" id="SSF143243">
    <property type="entry name" value="Nqo5-like"/>
    <property type="match status" value="1"/>
</dbReference>
<sequence length="176" mass="20151">MEEQTTQSAADGQTAIELVTGPISDALKARGLPHELTGLDNRKIEIIKVEPEHLIAVARALYDDGFNYLACQCGFDEGPGDSLGSMYHLTKLSDSADRPPEVRIKVFLPRDNPRVPSVYWIWKTADWQERESFDMYGIIYEGHPNLIRILMPEDWVGWPMRKDYVTPDFYELQDAY</sequence>
<name>NDHJ_GLOVI</name>
<protein>
    <recommendedName>
        <fullName evidence="1">NAD(P)H-quinone oxidoreductase subunit J</fullName>
        <ecNumber evidence="1">7.1.1.-</ecNumber>
    </recommendedName>
    <alternativeName>
        <fullName>NAD(P)H dehydrogenase subunit J</fullName>
    </alternativeName>
    <alternativeName>
        <fullName evidence="1">NADH-plastoquinone oxidoreductase subunit J</fullName>
    </alternativeName>
    <alternativeName>
        <fullName evidence="1">NDH-1 subunit J</fullName>
        <shortName evidence="1">NDH-J</shortName>
    </alternativeName>
</protein>
<proteinExistence type="inferred from homology"/>
<reference key="1">
    <citation type="journal article" date="2003" name="DNA Res.">
        <title>Complete genome structure of Gloeobacter violaceus PCC 7421, a cyanobacterium that lacks thylakoids.</title>
        <authorList>
            <person name="Nakamura Y."/>
            <person name="Kaneko T."/>
            <person name="Sato S."/>
            <person name="Mimuro M."/>
            <person name="Miyashita H."/>
            <person name="Tsuchiya T."/>
            <person name="Sasamoto S."/>
            <person name="Watanabe A."/>
            <person name="Kawashima K."/>
            <person name="Kishida Y."/>
            <person name="Kiyokawa C."/>
            <person name="Kohara M."/>
            <person name="Matsumoto M."/>
            <person name="Matsuno A."/>
            <person name="Nakazaki N."/>
            <person name="Shimpo S."/>
            <person name="Takeuchi C."/>
            <person name="Yamada M."/>
            <person name="Tabata S."/>
        </authorList>
    </citation>
    <scope>NUCLEOTIDE SEQUENCE [LARGE SCALE GENOMIC DNA]</scope>
    <source>
        <strain>ATCC 29082 / PCC 7421</strain>
    </source>
</reference>
<gene>
    <name evidence="1" type="primary">ndhJ</name>
    <name type="ordered locus">glr0750</name>
</gene>